<gene>
    <name evidence="1" type="primary">pth</name>
    <name type="ordered locus">Bcen_2190</name>
</gene>
<organism>
    <name type="scientific">Burkholderia orbicola (strain AU 1054)</name>
    <dbReference type="NCBI Taxonomy" id="331271"/>
    <lineage>
        <taxon>Bacteria</taxon>
        <taxon>Pseudomonadati</taxon>
        <taxon>Pseudomonadota</taxon>
        <taxon>Betaproteobacteria</taxon>
        <taxon>Burkholderiales</taxon>
        <taxon>Burkholderiaceae</taxon>
        <taxon>Burkholderia</taxon>
        <taxon>Burkholderia cepacia complex</taxon>
        <taxon>Burkholderia orbicola</taxon>
    </lineage>
</organism>
<dbReference type="EC" id="3.1.1.29" evidence="1"/>
<dbReference type="EMBL" id="CP000378">
    <property type="protein sequence ID" value="ABF77091.1"/>
    <property type="molecule type" value="Genomic_DNA"/>
</dbReference>
<dbReference type="SMR" id="Q1BTG4"/>
<dbReference type="HOGENOM" id="CLU_062456_3_1_4"/>
<dbReference type="GO" id="GO:0005737">
    <property type="term" value="C:cytoplasm"/>
    <property type="evidence" value="ECO:0007669"/>
    <property type="project" value="UniProtKB-SubCell"/>
</dbReference>
<dbReference type="GO" id="GO:0004045">
    <property type="term" value="F:peptidyl-tRNA hydrolase activity"/>
    <property type="evidence" value="ECO:0007669"/>
    <property type="project" value="UniProtKB-UniRule"/>
</dbReference>
<dbReference type="GO" id="GO:0000049">
    <property type="term" value="F:tRNA binding"/>
    <property type="evidence" value="ECO:0007669"/>
    <property type="project" value="UniProtKB-UniRule"/>
</dbReference>
<dbReference type="GO" id="GO:0006515">
    <property type="term" value="P:protein quality control for misfolded or incompletely synthesized proteins"/>
    <property type="evidence" value="ECO:0007669"/>
    <property type="project" value="UniProtKB-UniRule"/>
</dbReference>
<dbReference type="GO" id="GO:0072344">
    <property type="term" value="P:rescue of stalled ribosome"/>
    <property type="evidence" value="ECO:0007669"/>
    <property type="project" value="UniProtKB-UniRule"/>
</dbReference>
<dbReference type="CDD" id="cd00462">
    <property type="entry name" value="PTH"/>
    <property type="match status" value="1"/>
</dbReference>
<dbReference type="FunFam" id="3.40.50.1470:FF:000001">
    <property type="entry name" value="Peptidyl-tRNA hydrolase"/>
    <property type="match status" value="1"/>
</dbReference>
<dbReference type="Gene3D" id="3.40.50.1470">
    <property type="entry name" value="Peptidyl-tRNA hydrolase"/>
    <property type="match status" value="1"/>
</dbReference>
<dbReference type="HAMAP" id="MF_00083">
    <property type="entry name" value="Pept_tRNA_hydro_bact"/>
    <property type="match status" value="1"/>
</dbReference>
<dbReference type="InterPro" id="IPR001328">
    <property type="entry name" value="Pept_tRNA_hydro"/>
</dbReference>
<dbReference type="InterPro" id="IPR018171">
    <property type="entry name" value="Pept_tRNA_hydro_CS"/>
</dbReference>
<dbReference type="InterPro" id="IPR036416">
    <property type="entry name" value="Pept_tRNA_hydro_sf"/>
</dbReference>
<dbReference type="NCBIfam" id="TIGR00447">
    <property type="entry name" value="pth"/>
    <property type="match status" value="1"/>
</dbReference>
<dbReference type="PANTHER" id="PTHR17224">
    <property type="entry name" value="PEPTIDYL-TRNA HYDROLASE"/>
    <property type="match status" value="1"/>
</dbReference>
<dbReference type="PANTHER" id="PTHR17224:SF1">
    <property type="entry name" value="PEPTIDYL-TRNA HYDROLASE"/>
    <property type="match status" value="1"/>
</dbReference>
<dbReference type="Pfam" id="PF01195">
    <property type="entry name" value="Pept_tRNA_hydro"/>
    <property type="match status" value="1"/>
</dbReference>
<dbReference type="SUPFAM" id="SSF53178">
    <property type="entry name" value="Peptidyl-tRNA hydrolase-like"/>
    <property type="match status" value="1"/>
</dbReference>
<dbReference type="PROSITE" id="PS01195">
    <property type="entry name" value="PEPT_TRNA_HYDROL_1"/>
    <property type="match status" value="1"/>
</dbReference>
<dbReference type="PROSITE" id="PS01196">
    <property type="entry name" value="PEPT_TRNA_HYDROL_2"/>
    <property type="match status" value="1"/>
</dbReference>
<sequence>MIKLIVGLGNPGAEYTATRHNAGFWLIDQLAREAGTTLRDERRFHGFYAKARLHGEEVHLLEPQTYMNRSGQSVVALAQFFKILPDQILVAHDELDLPPGTVKLKLGGGSGGHNGLKDITAHLSSQQYWRLRIGIGHPRDLISESARAGAKPDVANFVLKPPRREEQDVIDASIERALAVMPMVVKGELDRATMQLHRN</sequence>
<reference key="1">
    <citation type="submission" date="2006-05" db="EMBL/GenBank/DDBJ databases">
        <title>Complete sequence of chromosome 1 of Burkholderia cenocepacia AU 1054.</title>
        <authorList>
            <consortium name="US DOE Joint Genome Institute"/>
            <person name="Copeland A."/>
            <person name="Lucas S."/>
            <person name="Lapidus A."/>
            <person name="Barry K."/>
            <person name="Detter J.C."/>
            <person name="Glavina del Rio T."/>
            <person name="Hammon N."/>
            <person name="Israni S."/>
            <person name="Dalin E."/>
            <person name="Tice H."/>
            <person name="Pitluck S."/>
            <person name="Chain P."/>
            <person name="Malfatti S."/>
            <person name="Shin M."/>
            <person name="Vergez L."/>
            <person name="Schmutz J."/>
            <person name="Larimer F."/>
            <person name="Land M."/>
            <person name="Hauser L."/>
            <person name="Kyrpides N."/>
            <person name="Lykidis A."/>
            <person name="LiPuma J.J."/>
            <person name="Konstantinidis K."/>
            <person name="Tiedje J.M."/>
            <person name="Richardson P."/>
        </authorList>
    </citation>
    <scope>NUCLEOTIDE SEQUENCE [LARGE SCALE GENOMIC DNA]</scope>
    <source>
        <strain>AU 1054</strain>
    </source>
</reference>
<name>PTH_BURO1</name>
<comment type="function">
    <text evidence="1">Hydrolyzes ribosome-free peptidyl-tRNAs (with 1 or more amino acids incorporated), which drop off the ribosome during protein synthesis, or as a result of ribosome stalling.</text>
</comment>
<comment type="function">
    <text evidence="1">Catalyzes the release of premature peptidyl moieties from peptidyl-tRNA molecules trapped in stalled 50S ribosomal subunits, and thus maintains levels of free tRNAs and 50S ribosomes.</text>
</comment>
<comment type="catalytic activity">
    <reaction evidence="1">
        <text>an N-acyl-L-alpha-aminoacyl-tRNA + H2O = an N-acyl-L-amino acid + a tRNA + H(+)</text>
        <dbReference type="Rhea" id="RHEA:54448"/>
        <dbReference type="Rhea" id="RHEA-COMP:10123"/>
        <dbReference type="Rhea" id="RHEA-COMP:13883"/>
        <dbReference type="ChEBI" id="CHEBI:15377"/>
        <dbReference type="ChEBI" id="CHEBI:15378"/>
        <dbReference type="ChEBI" id="CHEBI:59874"/>
        <dbReference type="ChEBI" id="CHEBI:78442"/>
        <dbReference type="ChEBI" id="CHEBI:138191"/>
        <dbReference type="EC" id="3.1.1.29"/>
    </reaction>
</comment>
<comment type="subunit">
    <text evidence="1">Monomer.</text>
</comment>
<comment type="subcellular location">
    <subcellularLocation>
        <location evidence="1">Cytoplasm</location>
    </subcellularLocation>
</comment>
<comment type="similarity">
    <text evidence="1">Belongs to the PTH family.</text>
</comment>
<protein>
    <recommendedName>
        <fullName evidence="1">Peptidyl-tRNA hydrolase</fullName>
        <shortName evidence="1">Pth</shortName>
        <ecNumber evidence="1">3.1.1.29</ecNumber>
    </recommendedName>
</protein>
<keyword id="KW-0963">Cytoplasm</keyword>
<keyword id="KW-0378">Hydrolase</keyword>
<keyword id="KW-0694">RNA-binding</keyword>
<keyword id="KW-0820">tRNA-binding</keyword>
<evidence type="ECO:0000255" key="1">
    <source>
        <dbReference type="HAMAP-Rule" id="MF_00083"/>
    </source>
</evidence>
<proteinExistence type="inferred from homology"/>
<feature type="chain" id="PRO_0000264011" description="Peptidyl-tRNA hydrolase">
    <location>
        <begin position="1"/>
        <end position="199"/>
    </location>
</feature>
<feature type="active site" description="Proton acceptor" evidence="1">
    <location>
        <position position="20"/>
    </location>
</feature>
<feature type="binding site" evidence="1">
    <location>
        <position position="15"/>
    </location>
    <ligand>
        <name>tRNA</name>
        <dbReference type="ChEBI" id="CHEBI:17843"/>
    </ligand>
</feature>
<feature type="binding site" evidence="1">
    <location>
        <position position="66"/>
    </location>
    <ligand>
        <name>tRNA</name>
        <dbReference type="ChEBI" id="CHEBI:17843"/>
    </ligand>
</feature>
<feature type="binding site" evidence="1">
    <location>
        <position position="68"/>
    </location>
    <ligand>
        <name>tRNA</name>
        <dbReference type="ChEBI" id="CHEBI:17843"/>
    </ligand>
</feature>
<feature type="binding site" evidence="1">
    <location>
        <position position="114"/>
    </location>
    <ligand>
        <name>tRNA</name>
        <dbReference type="ChEBI" id="CHEBI:17843"/>
    </ligand>
</feature>
<feature type="site" description="Discriminates between blocked and unblocked aminoacyl-tRNA" evidence="1">
    <location>
        <position position="10"/>
    </location>
</feature>
<feature type="site" description="Stabilizes the basic form of H active site to accept a proton" evidence="1">
    <location>
        <position position="93"/>
    </location>
</feature>
<accession>Q1BTG4</accession>